<organism>
    <name type="scientific">Burkholderia ambifaria (strain ATCC BAA-244 / DSM 16087 / CCUG 44356 / LMG 19182 / AMMD)</name>
    <name type="common">Burkholderia cepacia (strain AMMD)</name>
    <dbReference type="NCBI Taxonomy" id="339670"/>
    <lineage>
        <taxon>Bacteria</taxon>
        <taxon>Pseudomonadati</taxon>
        <taxon>Pseudomonadota</taxon>
        <taxon>Betaproteobacteria</taxon>
        <taxon>Burkholderiales</taxon>
        <taxon>Burkholderiaceae</taxon>
        <taxon>Burkholderia</taxon>
        <taxon>Burkholderia cepacia complex</taxon>
    </lineage>
</organism>
<dbReference type="EC" id="6.3.5.2" evidence="1"/>
<dbReference type="EMBL" id="CP000440">
    <property type="protein sequence ID" value="ABI87578.1"/>
    <property type="molecule type" value="Genomic_DNA"/>
</dbReference>
<dbReference type="RefSeq" id="WP_011657263.1">
    <property type="nucleotide sequence ID" value="NZ_CP009798.1"/>
</dbReference>
<dbReference type="SMR" id="Q0BE45"/>
<dbReference type="MEROPS" id="C26.957"/>
<dbReference type="GeneID" id="93085779"/>
<dbReference type="KEGG" id="bam:Bamb_2022"/>
<dbReference type="PATRIC" id="fig|339670.21.peg.2923"/>
<dbReference type="eggNOG" id="COG0518">
    <property type="taxonomic scope" value="Bacteria"/>
</dbReference>
<dbReference type="eggNOG" id="COG0519">
    <property type="taxonomic scope" value="Bacteria"/>
</dbReference>
<dbReference type="UniPathway" id="UPA00189">
    <property type="reaction ID" value="UER00296"/>
</dbReference>
<dbReference type="Proteomes" id="UP000000662">
    <property type="component" value="Chromosome 1"/>
</dbReference>
<dbReference type="GO" id="GO:0005829">
    <property type="term" value="C:cytosol"/>
    <property type="evidence" value="ECO:0007669"/>
    <property type="project" value="TreeGrafter"/>
</dbReference>
<dbReference type="GO" id="GO:0005524">
    <property type="term" value="F:ATP binding"/>
    <property type="evidence" value="ECO:0007669"/>
    <property type="project" value="UniProtKB-UniRule"/>
</dbReference>
<dbReference type="GO" id="GO:0003921">
    <property type="term" value="F:GMP synthase activity"/>
    <property type="evidence" value="ECO:0007669"/>
    <property type="project" value="InterPro"/>
</dbReference>
<dbReference type="CDD" id="cd01742">
    <property type="entry name" value="GATase1_GMP_Synthase"/>
    <property type="match status" value="1"/>
</dbReference>
<dbReference type="CDD" id="cd01997">
    <property type="entry name" value="GMP_synthase_C"/>
    <property type="match status" value="1"/>
</dbReference>
<dbReference type="FunFam" id="3.30.300.10:FF:000002">
    <property type="entry name" value="GMP synthase [glutamine-hydrolyzing]"/>
    <property type="match status" value="1"/>
</dbReference>
<dbReference type="FunFam" id="3.40.50.620:FF:000001">
    <property type="entry name" value="GMP synthase [glutamine-hydrolyzing]"/>
    <property type="match status" value="1"/>
</dbReference>
<dbReference type="FunFam" id="3.40.50.880:FF:000001">
    <property type="entry name" value="GMP synthase [glutamine-hydrolyzing]"/>
    <property type="match status" value="1"/>
</dbReference>
<dbReference type="Gene3D" id="3.30.300.10">
    <property type="match status" value="1"/>
</dbReference>
<dbReference type="Gene3D" id="3.40.50.880">
    <property type="match status" value="1"/>
</dbReference>
<dbReference type="Gene3D" id="3.40.50.620">
    <property type="entry name" value="HUPs"/>
    <property type="match status" value="1"/>
</dbReference>
<dbReference type="HAMAP" id="MF_00344">
    <property type="entry name" value="GMP_synthase"/>
    <property type="match status" value="1"/>
</dbReference>
<dbReference type="InterPro" id="IPR029062">
    <property type="entry name" value="Class_I_gatase-like"/>
</dbReference>
<dbReference type="InterPro" id="IPR017926">
    <property type="entry name" value="GATASE"/>
</dbReference>
<dbReference type="InterPro" id="IPR001674">
    <property type="entry name" value="GMP_synth_C"/>
</dbReference>
<dbReference type="InterPro" id="IPR004739">
    <property type="entry name" value="GMP_synth_GATase"/>
</dbReference>
<dbReference type="InterPro" id="IPR022955">
    <property type="entry name" value="GMP_synthase"/>
</dbReference>
<dbReference type="InterPro" id="IPR025777">
    <property type="entry name" value="GMPS_ATP_PPase_dom"/>
</dbReference>
<dbReference type="InterPro" id="IPR022310">
    <property type="entry name" value="NAD/GMP_synthase"/>
</dbReference>
<dbReference type="InterPro" id="IPR014729">
    <property type="entry name" value="Rossmann-like_a/b/a_fold"/>
</dbReference>
<dbReference type="NCBIfam" id="TIGR00884">
    <property type="entry name" value="guaA_Cterm"/>
    <property type="match status" value="1"/>
</dbReference>
<dbReference type="NCBIfam" id="TIGR00888">
    <property type="entry name" value="guaA_Nterm"/>
    <property type="match status" value="1"/>
</dbReference>
<dbReference type="NCBIfam" id="NF000848">
    <property type="entry name" value="PRK00074.1"/>
    <property type="match status" value="1"/>
</dbReference>
<dbReference type="PANTHER" id="PTHR11922:SF2">
    <property type="entry name" value="GMP SYNTHASE [GLUTAMINE-HYDROLYZING]"/>
    <property type="match status" value="1"/>
</dbReference>
<dbReference type="PANTHER" id="PTHR11922">
    <property type="entry name" value="GMP SYNTHASE-RELATED"/>
    <property type="match status" value="1"/>
</dbReference>
<dbReference type="Pfam" id="PF00117">
    <property type="entry name" value="GATase"/>
    <property type="match status" value="1"/>
</dbReference>
<dbReference type="Pfam" id="PF00958">
    <property type="entry name" value="GMP_synt_C"/>
    <property type="match status" value="1"/>
</dbReference>
<dbReference type="Pfam" id="PF02540">
    <property type="entry name" value="NAD_synthase"/>
    <property type="match status" value="1"/>
</dbReference>
<dbReference type="SUPFAM" id="SSF52402">
    <property type="entry name" value="Adenine nucleotide alpha hydrolases-like"/>
    <property type="match status" value="1"/>
</dbReference>
<dbReference type="SUPFAM" id="SSF52317">
    <property type="entry name" value="Class I glutamine amidotransferase-like"/>
    <property type="match status" value="1"/>
</dbReference>
<dbReference type="SUPFAM" id="SSF54810">
    <property type="entry name" value="GMP synthetase C-terminal dimerisation domain"/>
    <property type="match status" value="1"/>
</dbReference>
<dbReference type="PROSITE" id="PS51273">
    <property type="entry name" value="GATASE_TYPE_1"/>
    <property type="match status" value="1"/>
</dbReference>
<dbReference type="PROSITE" id="PS51553">
    <property type="entry name" value="GMPS_ATP_PPASE"/>
    <property type="match status" value="1"/>
</dbReference>
<protein>
    <recommendedName>
        <fullName evidence="1">GMP synthase [glutamine-hydrolyzing]</fullName>
        <ecNumber evidence="1">6.3.5.2</ecNumber>
    </recommendedName>
    <alternativeName>
        <fullName evidence="1">GMP synthetase</fullName>
    </alternativeName>
    <alternativeName>
        <fullName evidence="1">Glutamine amidotransferase</fullName>
    </alternativeName>
</protein>
<sequence>MHDKILILDFGSQVTQLIARRVREAHVYCEIHPNDVSDEFVREFAPKAVILSGSHASTYEDHQLRAPQAVWDLGVPVLGICYGMQTMAVQLGGKVEWSDHREFGYAEMRAHGHTRLLDGIEDFTTAEGHGMLKVWMSHGDKVAELPPGFALMASTPSCPIAGMADEARGYYAVQFHPEVTHTVKGRQIIERFVLQIAGAKPDWIMSNHIEEAVAKIREQVGDEEVILGLSGGVDSSVAAALIHRAIGDQLTCVFVDHGLLRLNEGKMVLDMFEGRLHAKVVHVDASEQFLGHLTGVTDPEAKRKIIGREFVEVFQAEAQKLSKAKWLAQGTIYPDVVESGGTKTKKATTIKSHHNVGGLPETLGLKLLEPLRDLFKDEVRELGVALGLPPEMVYRHPFPGPGLGVRILGEVKREYADLLRRADAIFIEELRGTTATAQDAAAGLCGEADVGKTWYDLTSQAFAVFLPVKSVGVMGDGRTYDYVTSLRAVQTTDFMTAHWAHLPYALLGRASNRIINEVRGINRVVYDISGKPPATIEWE</sequence>
<proteinExistence type="inferred from homology"/>
<gene>
    <name evidence="1" type="primary">guaA</name>
    <name type="ordered locus">Bamb_2022</name>
</gene>
<keyword id="KW-0067">ATP-binding</keyword>
<keyword id="KW-0315">Glutamine amidotransferase</keyword>
<keyword id="KW-0332">GMP biosynthesis</keyword>
<keyword id="KW-0436">Ligase</keyword>
<keyword id="KW-0547">Nucleotide-binding</keyword>
<keyword id="KW-0658">Purine biosynthesis</keyword>
<comment type="function">
    <text evidence="1">Catalyzes the synthesis of GMP from XMP.</text>
</comment>
<comment type="catalytic activity">
    <reaction evidence="1">
        <text>XMP + L-glutamine + ATP + H2O = GMP + L-glutamate + AMP + diphosphate + 2 H(+)</text>
        <dbReference type="Rhea" id="RHEA:11680"/>
        <dbReference type="ChEBI" id="CHEBI:15377"/>
        <dbReference type="ChEBI" id="CHEBI:15378"/>
        <dbReference type="ChEBI" id="CHEBI:29985"/>
        <dbReference type="ChEBI" id="CHEBI:30616"/>
        <dbReference type="ChEBI" id="CHEBI:33019"/>
        <dbReference type="ChEBI" id="CHEBI:57464"/>
        <dbReference type="ChEBI" id="CHEBI:58115"/>
        <dbReference type="ChEBI" id="CHEBI:58359"/>
        <dbReference type="ChEBI" id="CHEBI:456215"/>
        <dbReference type="EC" id="6.3.5.2"/>
    </reaction>
</comment>
<comment type="pathway">
    <text evidence="1">Purine metabolism; GMP biosynthesis; GMP from XMP (L-Gln route): step 1/1.</text>
</comment>
<comment type="subunit">
    <text evidence="1">Homodimer.</text>
</comment>
<accession>Q0BE45</accession>
<reference key="1">
    <citation type="submission" date="2006-08" db="EMBL/GenBank/DDBJ databases">
        <title>Complete sequence of chromosome 1 of Burkholderia cepacia AMMD.</title>
        <authorList>
            <person name="Copeland A."/>
            <person name="Lucas S."/>
            <person name="Lapidus A."/>
            <person name="Barry K."/>
            <person name="Detter J.C."/>
            <person name="Glavina del Rio T."/>
            <person name="Hammon N."/>
            <person name="Israni S."/>
            <person name="Pitluck S."/>
            <person name="Bruce D."/>
            <person name="Chain P."/>
            <person name="Malfatti S."/>
            <person name="Shin M."/>
            <person name="Vergez L."/>
            <person name="Schmutz J."/>
            <person name="Larimer F."/>
            <person name="Land M."/>
            <person name="Hauser L."/>
            <person name="Kyrpides N."/>
            <person name="Kim E."/>
            <person name="Parke J."/>
            <person name="Coenye T."/>
            <person name="Konstantinidis K."/>
            <person name="Ramette A."/>
            <person name="Tiedje J."/>
            <person name="Richardson P."/>
        </authorList>
    </citation>
    <scope>NUCLEOTIDE SEQUENCE [LARGE SCALE GENOMIC DNA]</scope>
    <source>
        <strain>ATCC BAA-244 / DSM 16087 / CCUG 44356 / LMG 19182 / AMMD</strain>
    </source>
</reference>
<evidence type="ECO:0000255" key="1">
    <source>
        <dbReference type="HAMAP-Rule" id="MF_00344"/>
    </source>
</evidence>
<name>GUAA_BURCM</name>
<feature type="chain" id="PRO_1000120234" description="GMP synthase [glutamine-hydrolyzing]">
    <location>
        <begin position="1"/>
        <end position="539"/>
    </location>
</feature>
<feature type="domain" description="Glutamine amidotransferase type-1" evidence="1">
    <location>
        <begin position="4"/>
        <end position="202"/>
    </location>
</feature>
<feature type="domain" description="GMPS ATP-PPase" evidence="1">
    <location>
        <begin position="203"/>
        <end position="395"/>
    </location>
</feature>
<feature type="active site" description="Nucleophile" evidence="1">
    <location>
        <position position="81"/>
    </location>
</feature>
<feature type="active site" evidence="1">
    <location>
        <position position="176"/>
    </location>
</feature>
<feature type="active site" evidence="1">
    <location>
        <position position="178"/>
    </location>
</feature>
<feature type="binding site" evidence="1">
    <location>
        <begin position="230"/>
        <end position="236"/>
    </location>
    <ligand>
        <name>ATP</name>
        <dbReference type="ChEBI" id="CHEBI:30616"/>
    </ligand>
</feature>